<feature type="chain" id="PRO_1000089598" description="LexA repressor">
    <location>
        <begin position="1"/>
        <end position="205"/>
    </location>
</feature>
<feature type="DNA-binding region" description="H-T-H motif" evidence="1">
    <location>
        <begin position="28"/>
        <end position="48"/>
    </location>
</feature>
<feature type="active site" description="For autocatalytic cleavage activity" evidence="1">
    <location>
        <position position="122"/>
    </location>
</feature>
<feature type="active site" description="For autocatalytic cleavage activity" evidence="1">
    <location>
        <position position="159"/>
    </location>
</feature>
<feature type="site" description="Cleavage; by autolysis" evidence="1">
    <location>
        <begin position="87"/>
        <end position="88"/>
    </location>
</feature>
<sequence length="205" mass="22549">MRPLTPRQAEILELIKCNIAETGMPPTRAEIAKRLGFKSANAAEEHLKALAKKGCIEIIPGTSRGIRLAQTEELEEQGLPLIGQVAAGEPILAQEHVEQHYQVDPNMFHPSADFLLRVRGDSMKDIGILEGDLLAVHKAEQARNGQVVVARVEDDVTVKRFEKKGSTVYLHAENEDYSPIVVDLTNQSLSIEGLAVGVIRNGDWQ</sequence>
<keyword id="KW-0068">Autocatalytic cleavage</keyword>
<keyword id="KW-0227">DNA damage</keyword>
<keyword id="KW-0234">DNA repair</keyword>
<keyword id="KW-0235">DNA replication</keyword>
<keyword id="KW-0238">DNA-binding</keyword>
<keyword id="KW-0378">Hydrolase</keyword>
<keyword id="KW-1185">Reference proteome</keyword>
<keyword id="KW-0678">Repressor</keyword>
<keyword id="KW-0742">SOS response</keyword>
<keyword id="KW-0804">Transcription</keyword>
<keyword id="KW-0805">Transcription regulation</keyword>
<protein>
    <recommendedName>
        <fullName evidence="1">LexA repressor</fullName>
        <ecNumber evidence="1">3.4.21.88</ecNumber>
    </recommendedName>
</protein>
<proteinExistence type="inferred from homology"/>
<evidence type="ECO:0000255" key="1">
    <source>
        <dbReference type="HAMAP-Rule" id="MF_00015"/>
    </source>
</evidence>
<name>LEXA_SHEWM</name>
<dbReference type="EC" id="3.4.21.88" evidence="1"/>
<dbReference type="EMBL" id="CP000961">
    <property type="protein sequence ID" value="ACA84481.1"/>
    <property type="molecule type" value="Genomic_DNA"/>
</dbReference>
<dbReference type="RefSeq" id="WP_012322830.1">
    <property type="nucleotide sequence ID" value="NC_010506.1"/>
</dbReference>
<dbReference type="SMR" id="B1KM68"/>
<dbReference type="STRING" id="392500.Swoo_0180"/>
<dbReference type="MEROPS" id="S24.001"/>
<dbReference type="KEGG" id="swd:Swoo_0180"/>
<dbReference type="eggNOG" id="COG1974">
    <property type="taxonomic scope" value="Bacteria"/>
</dbReference>
<dbReference type="HOGENOM" id="CLU_066192_45_3_6"/>
<dbReference type="Proteomes" id="UP000002168">
    <property type="component" value="Chromosome"/>
</dbReference>
<dbReference type="GO" id="GO:0003677">
    <property type="term" value="F:DNA binding"/>
    <property type="evidence" value="ECO:0007669"/>
    <property type="project" value="UniProtKB-UniRule"/>
</dbReference>
<dbReference type="GO" id="GO:0004252">
    <property type="term" value="F:serine-type endopeptidase activity"/>
    <property type="evidence" value="ECO:0007669"/>
    <property type="project" value="UniProtKB-UniRule"/>
</dbReference>
<dbReference type="GO" id="GO:0006281">
    <property type="term" value="P:DNA repair"/>
    <property type="evidence" value="ECO:0007669"/>
    <property type="project" value="UniProtKB-UniRule"/>
</dbReference>
<dbReference type="GO" id="GO:0006260">
    <property type="term" value="P:DNA replication"/>
    <property type="evidence" value="ECO:0007669"/>
    <property type="project" value="UniProtKB-UniRule"/>
</dbReference>
<dbReference type="GO" id="GO:0045892">
    <property type="term" value="P:negative regulation of DNA-templated transcription"/>
    <property type="evidence" value="ECO:0007669"/>
    <property type="project" value="UniProtKB-UniRule"/>
</dbReference>
<dbReference type="GO" id="GO:0006508">
    <property type="term" value="P:proteolysis"/>
    <property type="evidence" value="ECO:0007669"/>
    <property type="project" value="InterPro"/>
</dbReference>
<dbReference type="GO" id="GO:0009432">
    <property type="term" value="P:SOS response"/>
    <property type="evidence" value="ECO:0007669"/>
    <property type="project" value="UniProtKB-UniRule"/>
</dbReference>
<dbReference type="CDD" id="cd06529">
    <property type="entry name" value="S24_LexA-like"/>
    <property type="match status" value="1"/>
</dbReference>
<dbReference type="FunFam" id="1.10.10.10:FF:000009">
    <property type="entry name" value="LexA repressor"/>
    <property type="match status" value="1"/>
</dbReference>
<dbReference type="FunFam" id="2.10.109.10:FF:000001">
    <property type="entry name" value="LexA repressor"/>
    <property type="match status" value="1"/>
</dbReference>
<dbReference type="Gene3D" id="2.10.109.10">
    <property type="entry name" value="Umud Fragment, subunit A"/>
    <property type="match status" value="1"/>
</dbReference>
<dbReference type="Gene3D" id="1.10.10.10">
    <property type="entry name" value="Winged helix-like DNA-binding domain superfamily/Winged helix DNA-binding domain"/>
    <property type="match status" value="1"/>
</dbReference>
<dbReference type="HAMAP" id="MF_00015">
    <property type="entry name" value="LexA"/>
    <property type="match status" value="1"/>
</dbReference>
<dbReference type="InterPro" id="IPR006200">
    <property type="entry name" value="LexA"/>
</dbReference>
<dbReference type="InterPro" id="IPR039418">
    <property type="entry name" value="LexA-like"/>
</dbReference>
<dbReference type="InterPro" id="IPR036286">
    <property type="entry name" value="LexA/Signal_pep-like_sf"/>
</dbReference>
<dbReference type="InterPro" id="IPR006199">
    <property type="entry name" value="LexA_DNA-bd_dom"/>
</dbReference>
<dbReference type="InterPro" id="IPR050077">
    <property type="entry name" value="LexA_repressor"/>
</dbReference>
<dbReference type="InterPro" id="IPR006197">
    <property type="entry name" value="Peptidase_S24_LexA"/>
</dbReference>
<dbReference type="InterPro" id="IPR015927">
    <property type="entry name" value="Peptidase_S24_S26A/B/C"/>
</dbReference>
<dbReference type="InterPro" id="IPR036388">
    <property type="entry name" value="WH-like_DNA-bd_sf"/>
</dbReference>
<dbReference type="InterPro" id="IPR036390">
    <property type="entry name" value="WH_DNA-bd_sf"/>
</dbReference>
<dbReference type="NCBIfam" id="TIGR00498">
    <property type="entry name" value="lexA"/>
    <property type="match status" value="1"/>
</dbReference>
<dbReference type="PANTHER" id="PTHR33516">
    <property type="entry name" value="LEXA REPRESSOR"/>
    <property type="match status" value="1"/>
</dbReference>
<dbReference type="PANTHER" id="PTHR33516:SF2">
    <property type="entry name" value="LEXA REPRESSOR-RELATED"/>
    <property type="match status" value="1"/>
</dbReference>
<dbReference type="Pfam" id="PF01726">
    <property type="entry name" value="LexA_DNA_bind"/>
    <property type="match status" value="1"/>
</dbReference>
<dbReference type="Pfam" id="PF00717">
    <property type="entry name" value="Peptidase_S24"/>
    <property type="match status" value="1"/>
</dbReference>
<dbReference type="PRINTS" id="PR00726">
    <property type="entry name" value="LEXASERPTASE"/>
</dbReference>
<dbReference type="SUPFAM" id="SSF51306">
    <property type="entry name" value="LexA/Signal peptidase"/>
    <property type="match status" value="1"/>
</dbReference>
<dbReference type="SUPFAM" id="SSF46785">
    <property type="entry name" value="Winged helix' DNA-binding domain"/>
    <property type="match status" value="1"/>
</dbReference>
<reference key="1">
    <citation type="submission" date="2008-02" db="EMBL/GenBank/DDBJ databases">
        <title>Complete sequence of Shewanella woodyi ATCC 51908.</title>
        <authorList>
            <consortium name="US DOE Joint Genome Institute"/>
            <person name="Copeland A."/>
            <person name="Lucas S."/>
            <person name="Lapidus A."/>
            <person name="Glavina del Rio T."/>
            <person name="Dalin E."/>
            <person name="Tice H."/>
            <person name="Bruce D."/>
            <person name="Goodwin L."/>
            <person name="Pitluck S."/>
            <person name="Sims D."/>
            <person name="Brettin T."/>
            <person name="Detter J.C."/>
            <person name="Han C."/>
            <person name="Kuske C.R."/>
            <person name="Schmutz J."/>
            <person name="Larimer F."/>
            <person name="Land M."/>
            <person name="Hauser L."/>
            <person name="Kyrpides N."/>
            <person name="Lykidis A."/>
            <person name="Zhao J.-S."/>
            <person name="Richardson P."/>
        </authorList>
    </citation>
    <scope>NUCLEOTIDE SEQUENCE [LARGE SCALE GENOMIC DNA]</scope>
    <source>
        <strain>ATCC 51908 / MS32</strain>
    </source>
</reference>
<accession>B1KM68</accession>
<gene>
    <name evidence="1" type="primary">lexA</name>
    <name type="ordered locus">Swoo_0180</name>
</gene>
<organism>
    <name type="scientific">Shewanella woodyi (strain ATCC 51908 / MS32)</name>
    <dbReference type="NCBI Taxonomy" id="392500"/>
    <lineage>
        <taxon>Bacteria</taxon>
        <taxon>Pseudomonadati</taxon>
        <taxon>Pseudomonadota</taxon>
        <taxon>Gammaproteobacteria</taxon>
        <taxon>Alteromonadales</taxon>
        <taxon>Shewanellaceae</taxon>
        <taxon>Shewanella</taxon>
    </lineage>
</organism>
<comment type="function">
    <text evidence="1">Represses a number of genes involved in the response to DNA damage (SOS response), including recA and lexA. In the presence of single-stranded DNA, RecA interacts with LexA causing an autocatalytic cleavage which disrupts the DNA-binding part of LexA, leading to derepression of the SOS regulon and eventually DNA repair.</text>
</comment>
<comment type="catalytic activity">
    <reaction evidence="1">
        <text>Hydrolysis of Ala-|-Gly bond in repressor LexA.</text>
        <dbReference type="EC" id="3.4.21.88"/>
    </reaction>
</comment>
<comment type="subunit">
    <text evidence="1">Homodimer.</text>
</comment>
<comment type="similarity">
    <text evidence="1">Belongs to the peptidase S24 family.</text>
</comment>